<proteinExistence type="inferred from homology"/>
<keyword id="KW-0963">Cytoplasm</keyword>
<keyword id="KW-0489">Methyltransferase</keyword>
<keyword id="KW-0545">Nucleotide biosynthesis</keyword>
<keyword id="KW-1185">Reference proteome</keyword>
<keyword id="KW-0808">Transferase</keyword>
<accession>Q0K889</accession>
<evidence type="ECO:0000255" key="1">
    <source>
        <dbReference type="HAMAP-Rule" id="MF_00008"/>
    </source>
</evidence>
<evidence type="ECO:0000305" key="2"/>
<comment type="function">
    <text evidence="1">Catalyzes the reductive methylation of 2'-deoxyuridine-5'-monophosphate (dUMP) to 2'-deoxythymidine-5'-monophosphate (dTMP) while utilizing 5,10-methylenetetrahydrofolate (mTHF) as the methyl donor and reductant in the reaction, yielding dihydrofolate (DHF) as a by-product. This enzymatic reaction provides an intracellular de novo source of dTMP, an essential precursor for DNA biosynthesis.</text>
</comment>
<comment type="catalytic activity">
    <reaction evidence="1">
        <text>dUMP + (6R)-5,10-methylene-5,6,7,8-tetrahydrofolate = 7,8-dihydrofolate + dTMP</text>
        <dbReference type="Rhea" id="RHEA:12104"/>
        <dbReference type="ChEBI" id="CHEBI:15636"/>
        <dbReference type="ChEBI" id="CHEBI:57451"/>
        <dbReference type="ChEBI" id="CHEBI:63528"/>
        <dbReference type="ChEBI" id="CHEBI:246422"/>
        <dbReference type="EC" id="2.1.1.45"/>
    </reaction>
</comment>
<comment type="pathway">
    <text evidence="1">Pyrimidine metabolism; dTTP biosynthesis.</text>
</comment>
<comment type="subunit">
    <text evidence="1">Homodimer.</text>
</comment>
<comment type="subcellular location">
    <subcellularLocation>
        <location evidence="1">Cytoplasm</location>
    </subcellularLocation>
</comment>
<comment type="similarity">
    <text evidence="1">Belongs to the thymidylate synthase family. Bacterial-type ThyA subfamily.</text>
</comment>
<comment type="sequence caution" evidence="2">
    <conflict type="erroneous initiation">
        <sequence resource="EMBL-CDS" id="CAJ93782"/>
    </conflict>
</comment>
<sequence>MKQYLDFMRHVYEHGTDKADRTGTGTRSVFGYQMRFDLRAGFPVVTTKKLHLKSIIYELLWFLQGSTNVRWLQEHGVTIWDEWADENGELGPVYGSQWRSWPTPDGRHIDQITDLVAQIRANPDSRRLIVSAWNVADIPRMKLPPCHAFFQFYVADGRLSCQLYQRSADIFLGVPFNIASYALLTHMMAQQTGLEVGDFVWTGGDCHLYNNHFEQVQTQLAREPLALPQLKILRKPDSIFDYRYEDFELAGYQSHAAIKAPVAV</sequence>
<gene>
    <name evidence="1" type="primary">thyA</name>
    <name type="ordered locus">H16_A2703</name>
</gene>
<dbReference type="EC" id="2.1.1.45" evidence="1"/>
<dbReference type="EMBL" id="AM260479">
    <property type="protein sequence ID" value="CAJ93782.1"/>
    <property type="status" value="ALT_INIT"/>
    <property type="molecule type" value="Genomic_DNA"/>
</dbReference>
<dbReference type="RefSeq" id="WP_010813609.1">
    <property type="nucleotide sequence ID" value="NZ_CP039287.1"/>
</dbReference>
<dbReference type="SMR" id="Q0K889"/>
<dbReference type="STRING" id="381666.H16_A2703"/>
<dbReference type="KEGG" id="reh:H16_A2703"/>
<dbReference type="eggNOG" id="COG0207">
    <property type="taxonomic scope" value="Bacteria"/>
</dbReference>
<dbReference type="HOGENOM" id="CLU_021669_0_0_4"/>
<dbReference type="OrthoDB" id="9774633at2"/>
<dbReference type="UniPathway" id="UPA00575"/>
<dbReference type="Proteomes" id="UP000008210">
    <property type="component" value="Chromosome 1"/>
</dbReference>
<dbReference type="GO" id="GO:0005829">
    <property type="term" value="C:cytosol"/>
    <property type="evidence" value="ECO:0007669"/>
    <property type="project" value="TreeGrafter"/>
</dbReference>
<dbReference type="GO" id="GO:0004799">
    <property type="term" value="F:thymidylate synthase activity"/>
    <property type="evidence" value="ECO:0007669"/>
    <property type="project" value="UniProtKB-UniRule"/>
</dbReference>
<dbReference type="GO" id="GO:0006231">
    <property type="term" value="P:dTMP biosynthetic process"/>
    <property type="evidence" value="ECO:0007669"/>
    <property type="project" value="UniProtKB-UniRule"/>
</dbReference>
<dbReference type="GO" id="GO:0006235">
    <property type="term" value="P:dTTP biosynthetic process"/>
    <property type="evidence" value="ECO:0007669"/>
    <property type="project" value="UniProtKB-UniRule"/>
</dbReference>
<dbReference type="GO" id="GO:0032259">
    <property type="term" value="P:methylation"/>
    <property type="evidence" value="ECO:0007669"/>
    <property type="project" value="UniProtKB-KW"/>
</dbReference>
<dbReference type="CDD" id="cd00351">
    <property type="entry name" value="TS_Pyrimidine_HMase"/>
    <property type="match status" value="1"/>
</dbReference>
<dbReference type="FunFam" id="3.30.572.10:FF:000001">
    <property type="entry name" value="Thymidylate synthase"/>
    <property type="match status" value="1"/>
</dbReference>
<dbReference type="Gene3D" id="3.30.572.10">
    <property type="entry name" value="Thymidylate synthase/dCMP hydroxymethylase domain"/>
    <property type="match status" value="1"/>
</dbReference>
<dbReference type="HAMAP" id="MF_00008">
    <property type="entry name" value="Thymidy_synth_bact"/>
    <property type="match status" value="1"/>
</dbReference>
<dbReference type="InterPro" id="IPR045097">
    <property type="entry name" value="Thymidate_synth/dCMP_Mease"/>
</dbReference>
<dbReference type="InterPro" id="IPR023451">
    <property type="entry name" value="Thymidate_synth/dCMP_Mease_dom"/>
</dbReference>
<dbReference type="InterPro" id="IPR036926">
    <property type="entry name" value="Thymidate_synth/dCMP_Mease_sf"/>
</dbReference>
<dbReference type="InterPro" id="IPR000398">
    <property type="entry name" value="Thymidylate_synthase"/>
</dbReference>
<dbReference type="InterPro" id="IPR020940">
    <property type="entry name" value="Thymidylate_synthase_AS"/>
</dbReference>
<dbReference type="NCBIfam" id="NF002497">
    <property type="entry name" value="PRK01827.1-3"/>
    <property type="match status" value="1"/>
</dbReference>
<dbReference type="NCBIfam" id="NF002499">
    <property type="entry name" value="PRK01827.1-5"/>
    <property type="match status" value="1"/>
</dbReference>
<dbReference type="NCBIfam" id="TIGR03284">
    <property type="entry name" value="thym_sym"/>
    <property type="match status" value="2"/>
</dbReference>
<dbReference type="PANTHER" id="PTHR11548:SF9">
    <property type="entry name" value="THYMIDYLATE SYNTHASE"/>
    <property type="match status" value="1"/>
</dbReference>
<dbReference type="PANTHER" id="PTHR11548">
    <property type="entry name" value="THYMIDYLATE SYNTHASE 1"/>
    <property type="match status" value="1"/>
</dbReference>
<dbReference type="Pfam" id="PF00303">
    <property type="entry name" value="Thymidylat_synt"/>
    <property type="match status" value="1"/>
</dbReference>
<dbReference type="PRINTS" id="PR00108">
    <property type="entry name" value="THYMDSNTHASE"/>
</dbReference>
<dbReference type="SUPFAM" id="SSF55831">
    <property type="entry name" value="Thymidylate synthase/dCMP hydroxymethylase"/>
    <property type="match status" value="1"/>
</dbReference>
<dbReference type="PROSITE" id="PS00091">
    <property type="entry name" value="THYMIDYLATE_SYNTHASE"/>
    <property type="match status" value="1"/>
</dbReference>
<feature type="chain" id="PRO_0000321477" description="Thymidylate synthase">
    <location>
        <begin position="1"/>
        <end position="264"/>
    </location>
</feature>
<feature type="active site" description="Nucleophile" evidence="1">
    <location>
        <position position="146"/>
    </location>
</feature>
<feature type="binding site" description="in other chain" evidence="1">
    <location>
        <position position="21"/>
    </location>
    <ligand>
        <name>dUMP</name>
        <dbReference type="ChEBI" id="CHEBI:246422"/>
        <note>ligand shared between dimeric partners</note>
    </ligand>
</feature>
<feature type="binding site" evidence="1">
    <location>
        <position position="51"/>
    </location>
    <ligand>
        <name>(6R)-5,10-methylene-5,6,7,8-tetrahydrofolate</name>
        <dbReference type="ChEBI" id="CHEBI:15636"/>
    </ligand>
</feature>
<feature type="binding site" evidence="1">
    <location>
        <begin position="126"/>
        <end position="127"/>
    </location>
    <ligand>
        <name>dUMP</name>
        <dbReference type="ChEBI" id="CHEBI:246422"/>
        <note>ligand shared between dimeric partners</note>
    </ligand>
</feature>
<feature type="binding site" description="in other chain" evidence="1">
    <location>
        <begin position="166"/>
        <end position="169"/>
    </location>
    <ligand>
        <name>dUMP</name>
        <dbReference type="ChEBI" id="CHEBI:246422"/>
        <note>ligand shared between dimeric partners</note>
    </ligand>
</feature>
<feature type="binding site" evidence="1">
    <location>
        <position position="169"/>
    </location>
    <ligand>
        <name>(6R)-5,10-methylene-5,6,7,8-tetrahydrofolate</name>
        <dbReference type="ChEBI" id="CHEBI:15636"/>
    </ligand>
</feature>
<feature type="binding site" description="in other chain" evidence="1">
    <location>
        <position position="177"/>
    </location>
    <ligand>
        <name>dUMP</name>
        <dbReference type="ChEBI" id="CHEBI:246422"/>
        <note>ligand shared between dimeric partners</note>
    </ligand>
</feature>
<feature type="binding site" description="in other chain" evidence="1">
    <location>
        <begin position="207"/>
        <end position="209"/>
    </location>
    <ligand>
        <name>dUMP</name>
        <dbReference type="ChEBI" id="CHEBI:246422"/>
        <note>ligand shared between dimeric partners</note>
    </ligand>
</feature>
<feature type="binding site" evidence="1">
    <location>
        <position position="263"/>
    </location>
    <ligand>
        <name>(6R)-5,10-methylene-5,6,7,8-tetrahydrofolate</name>
        <dbReference type="ChEBI" id="CHEBI:15636"/>
    </ligand>
</feature>
<protein>
    <recommendedName>
        <fullName evidence="1">Thymidylate synthase</fullName>
        <shortName evidence="1">TS</shortName>
        <shortName evidence="1">TSase</shortName>
        <ecNumber evidence="1">2.1.1.45</ecNumber>
    </recommendedName>
</protein>
<name>TYSY_CUPNH</name>
<organism>
    <name type="scientific">Cupriavidus necator (strain ATCC 17699 / DSM 428 / KCTC 22496 / NCIMB 10442 / H16 / Stanier 337)</name>
    <name type="common">Ralstonia eutropha</name>
    <dbReference type="NCBI Taxonomy" id="381666"/>
    <lineage>
        <taxon>Bacteria</taxon>
        <taxon>Pseudomonadati</taxon>
        <taxon>Pseudomonadota</taxon>
        <taxon>Betaproteobacteria</taxon>
        <taxon>Burkholderiales</taxon>
        <taxon>Burkholderiaceae</taxon>
        <taxon>Cupriavidus</taxon>
    </lineage>
</organism>
<reference key="1">
    <citation type="journal article" date="2006" name="Nat. Biotechnol.">
        <title>Genome sequence of the bioplastic-producing 'Knallgas' bacterium Ralstonia eutropha H16.</title>
        <authorList>
            <person name="Pohlmann A."/>
            <person name="Fricke W.F."/>
            <person name="Reinecke F."/>
            <person name="Kusian B."/>
            <person name="Liesegang H."/>
            <person name="Cramm R."/>
            <person name="Eitinger T."/>
            <person name="Ewering C."/>
            <person name="Poetter M."/>
            <person name="Schwartz E."/>
            <person name="Strittmatter A."/>
            <person name="Voss I."/>
            <person name="Gottschalk G."/>
            <person name="Steinbuechel A."/>
            <person name="Friedrich B."/>
            <person name="Bowien B."/>
        </authorList>
    </citation>
    <scope>NUCLEOTIDE SEQUENCE [LARGE SCALE GENOMIC DNA]</scope>
    <source>
        <strain>ATCC 17699 / DSM 428 / KCTC 22496 / NCIMB 10442 / H16 / Stanier 337</strain>
    </source>
</reference>